<proteinExistence type="inferred from homology"/>
<feature type="chain" id="PRO_0000316380" description="Photosystem II protein D1 1" evidence="1">
    <location>
        <begin position="1"/>
        <end position="344"/>
    </location>
</feature>
<feature type="propeptide" id="PRO_0000316381" evidence="1">
    <location>
        <begin position="345"/>
        <end position="360"/>
    </location>
</feature>
<feature type="transmembrane region" description="Helical" evidence="1">
    <location>
        <begin position="29"/>
        <end position="46"/>
    </location>
</feature>
<feature type="transmembrane region" description="Helical" evidence="1">
    <location>
        <begin position="118"/>
        <end position="133"/>
    </location>
</feature>
<feature type="transmembrane region" description="Helical" evidence="1">
    <location>
        <begin position="142"/>
        <end position="156"/>
    </location>
</feature>
<feature type="transmembrane region" description="Helical" evidence="1">
    <location>
        <begin position="197"/>
        <end position="218"/>
    </location>
</feature>
<feature type="transmembrane region" description="Helical" evidence="1">
    <location>
        <begin position="274"/>
        <end position="288"/>
    </location>
</feature>
<feature type="binding site" description="axial binding residue" evidence="1">
    <location>
        <position position="118"/>
    </location>
    <ligand>
        <name>chlorophyll a</name>
        <dbReference type="ChEBI" id="CHEBI:58416"/>
        <label>ChlzD1</label>
    </ligand>
    <ligandPart>
        <name>Mg</name>
        <dbReference type="ChEBI" id="CHEBI:25107"/>
    </ligandPart>
</feature>
<feature type="binding site" evidence="1">
    <location>
        <position position="126"/>
    </location>
    <ligand>
        <name>pheophytin a</name>
        <dbReference type="ChEBI" id="CHEBI:136840"/>
        <label>D1</label>
    </ligand>
</feature>
<feature type="binding site" evidence="1">
    <location>
        <position position="170"/>
    </location>
    <ligand>
        <name>[CaMn4O5] cluster</name>
        <dbReference type="ChEBI" id="CHEBI:189552"/>
    </ligand>
</feature>
<feature type="binding site" evidence="1">
    <location>
        <position position="189"/>
    </location>
    <ligand>
        <name>[CaMn4O5] cluster</name>
        <dbReference type="ChEBI" id="CHEBI:189552"/>
    </ligand>
</feature>
<feature type="binding site" description="axial binding residue" evidence="1">
    <location>
        <position position="198"/>
    </location>
    <ligand>
        <name>chlorophyll a</name>
        <dbReference type="ChEBI" id="CHEBI:58416"/>
        <label>PD1</label>
    </ligand>
    <ligandPart>
        <name>Mg</name>
        <dbReference type="ChEBI" id="CHEBI:25107"/>
    </ligandPart>
</feature>
<feature type="binding site" evidence="1">
    <location>
        <position position="215"/>
    </location>
    <ligand>
        <name>a quinone</name>
        <dbReference type="ChEBI" id="CHEBI:132124"/>
        <label>B</label>
    </ligand>
</feature>
<feature type="binding site" evidence="1">
    <location>
        <position position="215"/>
    </location>
    <ligand>
        <name>Fe cation</name>
        <dbReference type="ChEBI" id="CHEBI:24875"/>
        <note>ligand shared with heterodimeric partner</note>
    </ligand>
</feature>
<feature type="binding site" evidence="1">
    <location>
        <begin position="264"/>
        <end position="265"/>
    </location>
    <ligand>
        <name>a quinone</name>
        <dbReference type="ChEBI" id="CHEBI:132124"/>
        <label>B</label>
    </ligand>
</feature>
<feature type="binding site" evidence="1">
    <location>
        <position position="272"/>
    </location>
    <ligand>
        <name>Fe cation</name>
        <dbReference type="ChEBI" id="CHEBI:24875"/>
        <note>ligand shared with heterodimeric partner</note>
    </ligand>
</feature>
<feature type="binding site" evidence="1">
    <location>
        <position position="332"/>
    </location>
    <ligand>
        <name>[CaMn4O5] cluster</name>
        <dbReference type="ChEBI" id="CHEBI:189552"/>
    </ligand>
</feature>
<feature type="binding site" evidence="1">
    <location>
        <position position="333"/>
    </location>
    <ligand>
        <name>[CaMn4O5] cluster</name>
        <dbReference type="ChEBI" id="CHEBI:189552"/>
    </ligand>
</feature>
<feature type="binding site" evidence="1">
    <location>
        <position position="342"/>
    </location>
    <ligand>
        <name>[CaMn4O5] cluster</name>
        <dbReference type="ChEBI" id="CHEBI:189552"/>
    </ligand>
</feature>
<feature type="binding site" evidence="1">
    <location>
        <position position="344"/>
    </location>
    <ligand>
        <name>[CaMn4O5] cluster</name>
        <dbReference type="ChEBI" id="CHEBI:189552"/>
    </ligand>
</feature>
<feature type="site" description="Tyrosine radical intermediate" evidence="1">
    <location>
        <position position="161"/>
    </location>
</feature>
<feature type="site" description="Stabilizes free radical intermediate" evidence="1">
    <location>
        <position position="190"/>
    </location>
</feature>
<feature type="site" description="Cleavage; by CtpA" evidence="1">
    <location>
        <begin position="344"/>
        <end position="345"/>
    </location>
</feature>
<keyword id="KW-0106">Calcium</keyword>
<keyword id="KW-0148">Chlorophyll</keyword>
<keyword id="KW-0157">Chromophore</keyword>
<keyword id="KW-0249">Electron transport</keyword>
<keyword id="KW-0359">Herbicide resistance</keyword>
<keyword id="KW-0408">Iron</keyword>
<keyword id="KW-0460">Magnesium</keyword>
<keyword id="KW-0464">Manganese</keyword>
<keyword id="KW-0472">Membrane</keyword>
<keyword id="KW-0479">Metal-binding</keyword>
<keyword id="KW-0560">Oxidoreductase</keyword>
<keyword id="KW-0602">Photosynthesis</keyword>
<keyword id="KW-0604">Photosystem II</keyword>
<keyword id="KW-0793">Thylakoid</keyword>
<keyword id="KW-0812">Transmembrane</keyword>
<keyword id="KW-1133">Transmembrane helix</keyword>
<keyword id="KW-0813">Transport</keyword>
<accession>Q5N5R2</accession>
<dbReference type="EC" id="1.10.3.9" evidence="1"/>
<dbReference type="EMBL" id="AP008231">
    <property type="protein sequence ID" value="BAD78356.1"/>
    <property type="molecule type" value="Genomic_DNA"/>
</dbReference>
<dbReference type="SMR" id="Q5N5R2"/>
<dbReference type="KEGG" id="syc:syc0166_d"/>
<dbReference type="eggNOG" id="ENOG502Z87P">
    <property type="taxonomic scope" value="Bacteria"/>
</dbReference>
<dbReference type="Proteomes" id="UP000001175">
    <property type="component" value="Chromosome"/>
</dbReference>
<dbReference type="GO" id="GO:0009523">
    <property type="term" value="C:photosystem II"/>
    <property type="evidence" value="ECO:0007669"/>
    <property type="project" value="UniProtKB-KW"/>
</dbReference>
<dbReference type="GO" id="GO:0031676">
    <property type="term" value="C:plasma membrane-derived thylakoid membrane"/>
    <property type="evidence" value="ECO:0007669"/>
    <property type="project" value="UniProtKB-SubCell"/>
</dbReference>
<dbReference type="GO" id="GO:0016168">
    <property type="term" value="F:chlorophyll binding"/>
    <property type="evidence" value="ECO:0007669"/>
    <property type="project" value="UniProtKB-UniRule"/>
</dbReference>
<dbReference type="GO" id="GO:0045156">
    <property type="term" value="F:electron transporter, transferring electrons within the cyclic electron transport pathway of photosynthesis activity"/>
    <property type="evidence" value="ECO:0007669"/>
    <property type="project" value="InterPro"/>
</dbReference>
<dbReference type="GO" id="GO:0005506">
    <property type="term" value="F:iron ion binding"/>
    <property type="evidence" value="ECO:0007669"/>
    <property type="project" value="UniProtKB-UniRule"/>
</dbReference>
<dbReference type="GO" id="GO:0016682">
    <property type="term" value="F:oxidoreductase activity, acting on diphenols and related substances as donors, oxygen as acceptor"/>
    <property type="evidence" value="ECO:0007669"/>
    <property type="project" value="UniProtKB-UniRule"/>
</dbReference>
<dbReference type="GO" id="GO:0010242">
    <property type="term" value="F:oxygen evolving activity"/>
    <property type="evidence" value="ECO:0007669"/>
    <property type="project" value="UniProtKB-EC"/>
</dbReference>
<dbReference type="GO" id="GO:0009772">
    <property type="term" value="P:photosynthetic electron transport in photosystem II"/>
    <property type="evidence" value="ECO:0007669"/>
    <property type="project" value="InterPro"/>
</dbReference>
<dbReference type="GO" id="GO:0009635">
    <property type="term" value="P:response to herbicide"/>
    <property type="evidence" value="ECO:0007669"/>
    <property type="project" value="UniProtKB-KW"/>
</dbReference>
<dbReference type="CDD" id="cd09289">
    <property type="entry name" value="Photosystem-II_D1"/>
    <property type="match status" value="1"/>
</dbReference>
<dbReference type="FunFam" id="1.20.85.10:FF:000002">
    <property type="entry name" value="Photosystem II protein D1"/>
    <property type="match status" value="1"/>
</dbReference>
<dbReference type="Gene3D" id="1.20.85.10">
    <property type="entry name" value="Photosystem II protein D1-like"/>
    <property type="match status" value="1"/>
</dbReference>
<dbReference type="HAMAP" id="MF_01379">
    <property type="entry name" value="PSII_PsbA_D1"/>
    <property type="match status" value="1"/>
</dbReference>
<dbReference type="InterPro" id="IPR055266">
    <property type="entry name" value="D1/D2"/>
</dbReference>
<dbReference type="InterPro" id="IPR036854">
    <property type="entry name" value="Photo_II_D1/D2_sf"/>
</dbReference>
<dbReference type="InterPro" id="IPR000484">
    <property type="entry name" value="Photo_RC_L/M"/>
</dbReference>
<dbReference type="InterPro" id="IPR055265">
    <property type="entry name" value="Photo_RC_L/M_CS"/>
</dbReference>
<dbReference type="InterPro" id="IPR005867">
    <property type="entry name" value="PSII_D1"/>
</dbReference>
<dbReference type="NCBIfam" id="TIGR01151">
    <property type="entry name" value="psbA"/>
    <property type="match status" value="1"/>
</dbReference>
<dbReference type="PANTHER" id="PTHR33149:SF12">
    <property type="entry name" value="PHOTOSYSTEM II D2 PROTEIN"/>
    <property type="match status" value="1"/>
</dbReference>
<dbReference type="PANTHER" id="PTHR33149">
    <property type="entry name" value="PHOTOSYSTEM II PROTEIN D1"/>
    <property type="match status" value="1"/>
</dbReference>
<dbReference type="Pfam" id="PF00124">
    <property type="entry name" value="Photo_RC"/>
    <property type="match status" value="1"/>
</dbReference>
<dbReference type="PRINTS" id="PR00256">
    <property type="entry name" value="REACTNCENTRE"/>
</dbReference>
<dbReference type="SUPFAM" id="SSF81483">
    <property type="entry name" value="Bacterial photosystem II reaction centre, L and M subunits"/>
    <property type="match status" value="1"/>
</dbReference>
<dbReference type="PROSITE" id="PS00244">
    <property type="entry name" value="REACTION_CENTER"/>
    <property type="match status" value="1"/>
</dbReference>
<organism>
    <name type="scientific">Synechococcus sp. (strain ATCC 27144 / PCC 6301 / SAUG 1402/1)</name>
    <name type="common">Anacystis nidulans</name>
    <dbReference type="NCBI Taxonomy" id="269084"/>
    <lineage>
        <taxon>Bacteria</taxon>
        <taxon>Bacillati</taxon>
        <taxon>Cyanobacteriota</taxon>
        <taxon>Cyanophyceae</taxon>
        <taxon>Synechococcales</taxon>
        <taxon>Synechococcaceae</taxon>
        <taxon>Synechococcus</taxon>
    </lineage>
</organism>
<reference key="1">
    <citation type="journal article" date="2007" name="Photosyn. Res.">
        <title>Complete nucleotide sequence of the freshwater unicellular cyanobacterium Synechococcus elongatus PCC 6301 chromosome: gene content and organization.</title>
        <authorList>
            <person name="Sugita C."/>
            <person name="Ogata K."/>
            <person name="Shikata M."/>
            <person name="Jikuya H."/>
            <person name="Takano J."/>
            <person name="Furumichi M."/>
            <person name="Kanehisa M."/>
            <person name="Omata T."/>
            <person name="Sugiura M."/>
            <person name="Sugita M."/>
        </authorList>
    </citation>
    <scope>NUCLEOTIDE SEQUENCE [LARGE SCALE GENOMIC DNA]</scope>
    <source>
        <strain>ATCC 27144 / PCC 6301 / SAUG 1402/1</strain>
    </source>
</reference>
<name>PSBA1_SYNP6</name>
<sequence length="360" mass="39751">MTTALQRRESASLWQQFCEWVTSTDNRLYVGWFGVLMIPTLLTATICFIVAFIAAPPVDIDGIREPVAGSLMYGNNIISGAVVPSSNAIGLHFYPIWEAASLDEWLYNGGPYQLVVFHFLIGVFCYMGREWELSYRLGMRPWICVAYSAPVAAATAVFLIYPIGQGSFSDGMPLGISGTFNFMFVFQAEHNILMHPFHMLGVAGVFGGSLFSAMHGSLVTSSLVRETTETESQNYGYKFGQEEETYNIVAAHGYFGRLIFQYASFNNSRSLHFFLAAWPVVGIWFTSLGISTMAFNLNGFNFNQSVLDSQGRVINTWADVLNRANLGMEVMHERNAHNFPLDLAAGEATPVALTAPAING</sequence>
<gene>
    <name evidence="1 2" type="primary">psbA1</name>
    <name type="synonym">psbAII</name>
    <name type="ordered locus">syc0166_d</name>
</gene>
<comment type="function">
    <text evidence="1">Photosystem II (PSII) is a light-driven water:plastoquinone oxidoreductase that uses light energy to abstract electrons from H(2)O, generating O(2) and a proton gradient subsequently used for ATP formation. It consists of a core antenna complex that captures photons, and an electron transfer chain that converts photonic excitation into a charge separation. The D1/D2 (PsbA/PsbD) reaction center heterodimer binds P680, the primary electron donor of PSII as well as several subsequent electron acceptors.</text>
</comment>
<comment type="catalytic activity">
    <reaction evidence="1">
        <text>2 a plastoquinone + 4 hnu + 2 H2O = 2 a plastoquinol + O2</text>
        <dbReference type="Rhea" id="RHEA:36359"/>
        <dbReference type="Rhea" id="RHEA-COMP:9561"/>
        <dbReference type="Rhea" id="RHEA-COMP:9562"/>
        <dbReference type="ChEBI" id="CHEBI:15377"/>
        <dbReference type="ChEBI" id="CHEBI:15379"/>
        <dbReference type="ChEBI" id="CHEBI:17757"/>
        <dbReference type="ChEBI" id="CHEBI:30212"/>
        <dbReference type="ChEBI" id="CHEBI:62192"/>
        <dbReference type="EC" id="1.10.3.9"/>
    </reaction>
</comment>
<comment type="cofactor">
    <text evidence="1">The D1/D2 heterodimer binds P680, chlorophylls that are the primary electron donor of PSII, and subsequent electron acceptors. It shares a non-heme iron and each subunit binds pheophytin, quinone, additional chlorophylls, carotenoids and lipids. D1 provides most of the ligands for the Mn4-Ca-O5 cluster of the oxygen-evolving complex (OEC). There is also a Cl(-1) ion associated with D1 and D2, which is required for oxygen evolution. The PSII complex binds additional chlorophylls, carotenoids and specific lipids.</text>
</comment>
<comment type="subunit">
    <text evidence="1">PSII is composed of 1 copy each of membrane proteins PsbA, PsbB, PsbC, PsbD, PsbE, PsbF, PsbH, PsbI, PsbJ, PsbK, PsbL, PsbM, PsbT, PsbX, PsbY, PsbZ, Psb30/Ycf12, peripheral proteins PsbO, CyanoQ (PsbQ), PsbU, PsbV and a large number of cofactors. It forms dimeric complexes.</text>
</comment>
<comment type="subcellular location">
    <subcellularLocation>
        <location evidence="1">Cellular thylakoid membrane</location>
        <topology evidence="1">Multi-pass membrane protein</topology>
    </subcellularLocation>
</comment>
<comment type="PTM">
    <text evidence="1">Tyr-161 forms a radical intermediate that is referred to as redox-active TyrZ, YZ or Y-Z.</text>
</comment>
<comment type="PTM">
    <text evidence="1">C-terminally processed by CtpA; processing is essential to allow assembly of the oxygen-evolving complex and thus photosynthetic growth.</text>
</comment>
<comment type="miscellaneous">
    <text evidence="1">Cyanobacteria usually contain more than 2 copies of the psbA gene.</text>
</comment>
<comment type="miscellaneous">
    <text evidence="1">2 of the reaction center chlorophylls (ChlD1 and ChlD2) are entirely coordinated by water.</text>
</comment>
<comment type="miscellaneous">
    <text evidence="1">Herbicides such as atrazine, BNT, diuron or ioxynil bind in the Q(B) binding site and block subsequent electron transfer.</text>
</comment>
<comment type="similarity">
    <text evidence="1">Belongs to the reaction center PufL/M/PsbA/D family.</text>
</comment>
<protein>
    <recommendedName>
        <fullName evidence="1">Photosystem II protein D1 1</fullName>
        <shortName evidence="1">PSII D1 protein 1</shortName>
        <ecNumber evidence="1">1.10.3.9</ecNumber>
    </recommendedName>
    <alternativeName>
        <fullName evidence="1">Photosystem II Q(B) protein 1</fullName>
    </alternativeName>
</protein>
<evidence type="ECO:0000255" key="1">
    <source>
        <dbReference type="HAMAP-Rule" id="MF_01379"/>
    </source>
</evidence>
<evidence type="ECO:0000305" key="2"/>